<evidence type="ECO:0000250" key="1"/>
<evidence type="ECO:0000305" key="2"/>
<keyword id="KW-0167">Capsid protein</keyword>
<keyword id="KW-1185">Reference proteome</keyword>
<keyword id="KW-0946">Virion</keyword>
<sequence length="477" mass="53099">MGAYTHVDFHESRLLKDKQDYLSFKSADEAPPDPPGYVRPDSYVRAYLIQRADFPNTQSLSVTLSIASNKLASGLMGSDAVSSSFMLMNDVGDYFECGVCHNKPYLGREVIFCRKYIGGRGVEITTGKNYTSNNWNEASYVIQVNVVDGLAQTTVNSTYTQTDVSGLPKNWTRIYKITKIVSVDQNLYPGCFSDSKLGVMRIRSLLVSPVRIFFRDILLKPLKKSFNARIEDVLNIDDTSLLVPSPVVPESTGGVGPSEQLDVVALTSDVTELINTRGQGKICFPDSVLSINEADIYDERYLPITEALQINARLRRLVLSKGGSQTPRDMGNMIVAMIQLFVLYSTVKNISVKDGYRVETELGQKRVYLSYSEVREAILGGKYGASPTNTVRSFMRYFAHTTITLLIEKKIQPACTALAKHGVPKRFTPYCFDFALLDNRYYPADVLKANAMACAIAIKSANLRRKGSETYNILESI</sequence>
<gene>
    <name type="ORF">ORF7</name>
</gene>
<reference key="1">
    <citation type="journal article" date="1997" name="Arch. Virol.">
        <title>The coat protein gene of grapevine leafroll associated closterovirus-3: cloning, nucleotide sequencing and expression in transgenic plants.</title>
        <authorList>
            <person name="Ling K.S."/>
            <person name="Zhu H.Y."/>
            <person name="Alvizo H."/>
            <person name="Hu J.S."/>
            <person name="Drong R.F."/>
            <person name="Slightom J.L."/>
            <person name="Gonsalves D."/>
        </authorList>
    </citation>
    <scope>NUCLEOTIDE SEQUENCE [GENOMIC RNA]</scope>
</reference>
<reference key="2">
    <citation type="journal article" date="1998" name="J. Gen. Virol.">
        <title>Nucleotide sequence of the 3'-terminal two-thirds of the grapevine leafroll-associated virus-3 genome reveals a typical monopartite closterovirus.</title>
        <authorList>
            <person name="Ling K.S."/>
            <person name="Zhu H.Y."/>
            <person name="Drong R.F."/>
            <person name="Slightom J.L."/>
            <person name="McFerson J.R."/>
            <person name="Gonsalves D."/>
        </authorList>
    </citation>
    <scope>NUCLEOTIDE SEQUENCE [GENOMIC RNA]</scope>
</reference>
<dbReference type="EMBL" id="AF037268">
    <property type="protein sequence ID" value="AAC40711.1"/>
    <property type="molecule type" value="Genomic_RNA"/>
</dbReference>
<dbReference type="RefSeq" id="NP_813802.1">
    <property type="nucleotide sequence ID" value="NC_004667.1"/>
</dbReference>
<dbReference type="KEGG" id="vg:1444474"/>
<dbReference type="Proteomes" id="UP000006707">
    <property type="component" value="Segment"/>
</dbReference>
<dbReference type="GO" id="GO:0019028">
    <property type="term" value="C:viral capsid"/>
    <property type="evidence" value="ECO:0007669"/>
    <property type="project" value="UniProtKB-KW"/>
</dbReference>
<dbReference type="InterPro" id="IPR002679">
    <property type="entry name" value="Closter_coat"/>
</dbReference>
<dbReference type="Pfam" id="PF01785">
    <property type="entry name" value="Closter_coat"/>
    <property type="match status" value="1"/>
</dbReference>
<organismHost>
    <name type="scientific">Vitis vinifera</name>
    <name type="common">Grape</name>
    <dbReference type="NCBI Taxonomy" id="29760"/>
</organismHost>
<feature type="chain" id="PRO_0000402525" description="Minor capsid protein">
    <location>
        <begin position="1"/>
        <end position="477"/>
    </location>
</feature>
<protein>
    <recommendedName>
        <fullName>Minor capsid protein</fullName>
    </recommendedName>
    <alternativeName>
        <fullName>CPm</fullName>
    </alternativeName>
</protein>
<organism>
    <name type="scientific">Grapevine leafroll-associated virus 3 (isolate United States/NY1)</name>
    <name type="common">GLRaV-3</name>
    <name type="synonym">Grapevine leafroll-associated closterovirus (isolate 109)</name>
    <dbReference type="NCBI Taxonomy" id="651354"/>
    <lineage>
        <taxon>Viruses</taxon>
        <taxon>Riboviria</taxon>
        <taxon>Orthornavirae</taxon>
        <taxon>Kitrinoviricota</taxon>
        <taxon>Alsuviricetes</taxon>
        <taxon>Martellivirales</taxon>
        <taxon>Closteroviridae</taxon>
        <taxon>Ampelovirus</taxon>
        <taxon>Grapevine leafroll-associated virus 3</taxon>
    </lineage>
</organism>
<proteinExistence type="inferred from homology"/>
<name>CPM_GLRV3</name>
<accession>O41519</accession>
<comment type="function">
    <text evidence="1">Minor capsid protein that encapsidates the 5'-terminal portion of the viral genome.</text>
</comment>
<comment type="subcellular location">
    <subcellularLocation>
        <location evidence="1">Virion</location>
    </subcellularLocation>
</comment>
<comment type="similarity">
    <text evidence="2">Belongs to the closteroviridae minor capsid protein family.</text>
</comment>